<evidence type="ECO:0000250" key="1">
    <source>
        <dbReference type="UniProtKB" id="P02794"/>
    </source>
</evidence>
<evidence type="ECO:0000250" key="2">
    <source>
        <dbReference type="UniProtKB" id="P09528"/>
    </source>
</evidence>
<evidence type="ECO:0000250" key="3">
    <source>
        <dbReference type="UniProtKB" id="P19130"/>
    </source>
</evidence>
<evidence type="ECO:0000255" key="4">
    <source>
        <dbReference type="PROSITE-ProRule" id="PRU00085"/>
    </source>
</evidence>
<evidence type="ECO:0000305" key="5"/>
<proteinExistence type="evidence at transcript level"/>
<organism>
    <name type="scientific">Cricetulus griseus</name>
    <name type="common">Chinese hamster</name>
    <name type="synonym">Cricetulus barabensis griseus</name>
    <dbReference type="NCBI Taxonomy" id="10029"/>
    <lineage>
        <taxon>Eukaryota</taxon>
        <taxon>Metazoa</taxon>
        <taxon>Chordata</taxon>
        <taxon>Craniata</taxon>
        <taxon>Vertebrata</taxon>
        <taxon>Euteleostomi</taxon>
        <taxon>Mammalia</taxon>
        <taxon>Eutheria</taxon>
        <taxon>Euarchontoglires</taxon>
        <taxon>Glires</taxon>
        <taxon>Rodentia</taxon>
        <taxon>Myomorpha</taxon>
        <taxon>Muroidea</taxon>
        <taxon>Cricetidae</taxon>
        <taxon>Cricetinae</taxon>
        <taxon>Cricetulus</taxon>
    </lineage>
</organism>
<dbReference type="EC" id="1.16.3.1" evidence="1"/>
<dbReference type="EMBL" id="M99692">
    <property type="protein sequence ID" value="AAB46388.1"/>
    <property type="molecule type" value="mRNA"/>
</dbReference>
<dbReference type="PIR" id="I48109">
    <property type="entry name" value="I48109"/>
</dbReference>
<dbReference type="RefSeq" id="XP_007615470.1">
    <property type="nucleotide sequence ID" value="XM_007617280.2"/>
</dbReference>
<dbReference type="RefSeq" id="XP_007651686.1">
    <property type="nucleotide sequence ID" value="XM_007653496.2"/>
</dbReference>
<dbReference type="SMR" id="P29389"/>
<dbReference type="PaxDb" id="10029-XP_007615470.1"/>
<dbReference type="Ensembl" id="ENSCGRT00001025594.1">
    <property type="protein sequence ID" value="ENSCGRP00001021350.1"/>
    <property type="gene ID" value="ENSCGRG00001020220.1"/>
</dbReference>
<dbReference type="GeneID" id="100689102"/>
<dbReference type="CTD" id="2495"/>
<dbReference type="eggNOG" id="KOG2332">
    <property type="taxonomic scope" value="Eukaryota"/>
</dbReference>
<dbReference type="GeneTree" id="ENSGT00950000182841"/>
<dbReference type="OMA" id="FFLKASM"/>
<dbReference type="OrthoDB" id="186462at2759"/>
<dbReference type="Proteomes" id="UP000694386">
    <property type="component" value="Unplaced"/>
</dbReference>
<dbReference type="Proteomes" id="UP001108280">
    <property type="component" value="Unplaced"/>
</dbReference>
<dbReference type="GO" id="GO:0005776">
    <property type="term" value="C:autophagosome"/>
    <property type="evidence" value="ECO:0007669"/>
    <property type="project" value="UniProtKB-SubCell"/>
</dbReference>
<dbReference type="GO" id="GO:0031410">
    <property type="term" value="C:cytoplasmic vesicle"/>
    <property type="evidence" value="ECO:0007669"/>
    <property type="project" value="UniProtKB-KW"/>
</dbReference>
<dbReference type="GO" id="GO:0005764">
    <property type="term" value="C:lysosome"/>
    <property type="evidence" value="ECO:0007669"/>
    <property type="project" value="UniProtKB-SubCell"/>
</dbReference>
<dbReference type="GO" id="GO:0008199">
    <property type="term" value="F:ferric iron binding"/>
    <property type="evidence" value="ECO:0007669"/>
    <property type="project" value="InterPro"/>
</dbReference>
<dbReference type="GO" id="GO:0008198">
    <property type="term" value="F:ferrous iron binding"/>
    <property type="evidence" value="ECO:0007669"/>
    <property type="project" value="TreeGrafter"/>
</dbReference>
<dbReference type="GO" id="GO:0004322">
    <property type="term" value="F:ferroxidase activity"/>
    <property type="evidence" value="ECO:0007669"/>
    <property type="project" value="UniProtKB-EC"/>
</dbReference>
<dbReference type="GO" id="GO:0006955">
    <property type="term" value="P:immune response"/>
    <property type="evidence" value="ECO:0000250"/>
    <property type="project" value="UniProtKB"/>
</dbReference>
<dbReference type="GO" id="GO:0006879">
    <property type="term" value="P:intracellular iron ion homeostasis"/>
    <property type="evidence" value="ECO:0007669"/>
    <property type="project" value="UniProtKB-KW"/>
</dbReference>
<dbReference type="GO" id="GO:0006826">
    <property type="term" value="P:iron ion transport"/>
    <property type="evidence" value="ECO:0007669"/>
    <property type="project" value="InterPro"/>
</dbReference>
<dbReference type="GO" id="GO:0008285">
    <property type="term" value="P:negative regulation of cell population proliferation"/>
    <property type="evidence" value="ECO:0000250"/>
    <property type="project" value="UniProtKB"/>
</dbReference>
<dbReference type="GO" id="GO:0110076">
    <property type="term" value="P:negative regulation of ferroptosis"/>
    <property type="evidence" value="ECO:0000250"/>
    <property type="project" value="UniProtKB"/>
</dbReference>
<dbReference type="CDD" id="cd01056">
    <property type="entry name" value="Euk_Ferritin"/>
    <property type="match status" value="1"/>
</dbReference>
<dbReference type="FunFam" id="1.20.1260.10:FF:000024">
    <property type="entry name" value="Ferritin heavy chain"/>
    <property type="match status" value="1"/>
</dbReference>
<dbReference type="Gene3D" id="1.20.1260.10">
    <property type="match status" value="1"/>
</dbReference>
<dbReference type="InterPro" id="IPR001519">
    <property type="entry name" value="Ferritin"/>
</dbReference>
<dbReference type="InterPro" id="IPR012347">
    <property type="entry name" value="Ferritin-like"/>
</dbReference>
<dbReference type="InterPro" id="IPR009040">
    <property type="entry name" value="Ferritin-like_diiron"/>
</dbReference>
<dbReference type="InterPro" id="IPR009078">
    <property type="entry name" value="Ferritin-like_SF"/>
</dbReference>
<dbReference type="InterPro" id="IPR014034">
    <property type="entry name" value="Ferritin_CS"/>
</dbReference>
<dbReference type="InterPro" id="IPR008331">
    <property type="entry name" value="Ferritin_DPS_dom"/>
</dbReference>
<dbReference type="PANTHER" id="PTHR11431">
    <property type="entry name" value="FERRITIN"/>
    <property type="match status" value="1"/>
</dbReference>
<dbReference type="PANTHER" id="PTHR11431:SF37">
    <property type="entry name" value="FERRITIN HEAVY CHAIN"/>
    <property type="match status" value="1"/>
</dbReference>
<dbReference type="Pfam" id="PF00210">
    <property type="entry name" value="Ferritin"/>
    <property type="match status" value="1"/>
</dbReference>
<dbReference type="SUPFAM" id="SSF47240">
    <property type="entry name" value="Ferritin-like"/>
    <property type="match status" value="1"/>
</dbReference>
<dbReference type="PROSITE" id="PS00540">
    <property type="entry name" value="FERRITIN_1"/>
    <property type="match status" value="1"/>
</dbReference>
<dbReference type="PROSITE" id="PS00204">
    <property type="entry name" value="FERRITIN_2"/>
    <property type="match status" value="1"/>
</dbReference>
<dbReference type="PROSITE" id="PS50905">
    <property type="entry name" value="FERRITIN_LIKE"/>
    <property type="match status" value="1"/>
</dbReference>
<accession>P29389</accession>
<reference key="1">
    <citation type="journal article" date="1992" name="Mutat. Res.">
        <title>Differential gene expression in wild-type and X-ray-sensitive mutants of Chinese hamster ovary cell lines.</title>
        <authorList>
            <person name="Zhu W."/>
            <person name="Keng P."/>
            <person name="Chou W.G."/>
        </authorList>
    </citation>
    <scope>NUCLEOTIDE SEQUENCE [MRNA]</scope>
</reference>
<feature type="chain" id="PRO_0000201047" description="Ferritin heavy chain">
    <location>
        <begin position="1"/>
        <end position="186"/>
    </location>
</feature>
<feature type="domain" description="Ferritin-like diiron" evidence="4">
    <location>
        <begin position="16"/>
        <end position="165"/>
    </location>
</feature>
<feature type="binding site" evidence="4">
    <location>
        <position position="33"/>
    </location>
    <ligand>
        <name>Fe cation</name>
        <dbReference type="ChEBI" id="CHEBI:24875"/>
        <label>1</label>
    </ligand>
</feature>
<feature type="binding site" evidence="4">
    <location>
        <position position="68"/>
    </location>
    <ligand>
        <name>Fe cation</name>
        <dbReference type="ChEBI" id="CHEBI:24875"/>
        <label>1</label>
    </ligand>
</feature>
<feature type="binding site" evidence="4">
    <location>
        <position position="68"/>
    </location>
    <ligand>
        <name>Fe cation</name>
        <dbReference type="ChEBI" id="CHEBI:24875"/>
        <label>2</label>
    </ligand>
</feature>
<feature type="binding site" evidence="4">
    <location>
        <position position="71"/>
    </location>
    <ligand>
        <name>Fe cation</name>
        <dbReference type="ChEBI" id="CHEBI:24875"/>
        <label>1</label>
    </ligand>
</feature>
<feature type="binding site" evidence="4">
    <location>
        <position position="113"/>
    </location>
    <ligand>
        <name>Fe cation</name>
        <dbReference type="ChEBI" id="CHEBI:24875"/>
        <label>2</label>
    </ligand>
</feature>
<feature type="binding site" evidence="4">
    <location>
        <position position="147"/>
    </location>
    <ligand>
        <name>Fe cation</name>
        <dbReference type="ChEBI" id="CHEBI:24875"/>
        <label>2</label>
    </ligand>
</feature>
<feature type="modified residue" description="Phosphoserine" evidence="1">
    <location>
        <position position="184"/>
    </location>
</feature>
<comment type="function">
    <text evidence="1 2">Stores iron in a soluble, non-toxic, readily available form (By similarity). Important for iron homeostasis (By similarity). Has ferroxidase activity (By similarity). Iron is taken up in the ferrous form and deposited as ferric hydroxides after oxidation (By similarity). Also plays a role in delivery of iron to cells (By similarity). Mediates iron uptake in capsule cells of the developing kidney (By similarity). Delivery to lysosomes is mediated by the cargo receptor NCOA4 for autophagic degradation and release of iron (By similarity).</text>
</comment>
<comment type="catalytic activity">
    <reaction evidence="1">
        <text>4 Fe(2+) + O2 + 4 H(+) = 4 Fe(3+) + 2 H2O</text>
        <dbReference type="Rhea" id="RHEA:11148"/>
        <dbReference type="ChEBI" id="CHEBI:15377"/>
        <dbReference type="ChEBI" id="CHEBI:15378"/>
        <dbReference type="ChEBI" id="CHEBI:15379"/>
        <dbReference type="ChEBI" id="CHEBI:29033"/>
        <dbReference type="ChEBI" id="CHEBI:29034"/>
        <dbReference type="EC" id="1.16.3.1"/>
    </reaction>
</comment>
<comment type="subunit">
    <text evidence="1 2">Oligomer of 24 subunits. There are two types of subunits: L (light) chain and H (heavy) chain. The major chain can be light or heavy, depending on the species and tissue type. The functional molecule forms a roughly spherical shell with a diameter of 12 nm and contains a central cavity into which the insoluble mineral iron core is deposited. Interacts with NCOA4; NCOA4 promotes targeting of the iron-binding ferritin complex to autolysosomes following starvation or iron depletion (By similarity).</text>
</comment>
<comment type="subcellular location">
    <subcellularLocation>
        <location evidence="3">Cytoplasm</location>
    </subcellularLocation>
    <subcellularLocation>
        <location evidence="1">Lysosome</location>
    </subcellularLocation>
    <subcellularLocation>
        <location evidence="1">Cytoplasmic vesicle</location>
        <location evidence="1">Autophagosome</location>
    </subcellularLocation>
</comment>
<comment type="similarity">
    <text evidence="5">Belongs to the ferritin family.</text>
</comment>
<gene>
    <name type="primary">FTH1</name>
    <name type="synonym">FTH</name>
</gene>
<keyword id="KW-0963">Cytoplasm</keyword>
<keyword id="KW-0968">Cytoplasmic vesicle</keyword>
<keyword id="KW-0408">Iron</keyword>
<keyword id="KW-0409">Iron storage</keyword>
<keyword id="KW-0458">Lysosome</keyword>
<keyword id="KW-0479">Metal-binding</keyword>
<keyword id="KW-0560">Oxidoreductase</keyword>
<keyword id="KW-0597">Phosphoprotein</keyword>
<name>FRIH_CRIGR</name>
<sequence>MTTTALTTASPSQVRQNYHQDSEAAINRQINLELYASYVYLSMSCYFDRDDVALKNFAKYFLHQSHEEREHAEKLMKLQNQRGGRIFLQDIKKPDRDDWESGLNAMECALHLEKSVNQSLLELHKLATDKNDPHLCDFIETHYLNEQVKSIKELGDHVTNLRKMGAPEAGMAEYLFDKHTLGHSES</sequence>
<protein>
    <recommendedName>
        <fullName>Ferritin heavy chain</fullName>
        <shortName>Ferritin H subunit</shortName>
        <ecNumber evidence="1">1.16.3.1</ecNumber>
    </recommendedName>
</protein>